<proteinExistence type="inferred from homology"/>
<evidence type="ECO:0000255" key="1">
    <source>
        <dbReference type="HAMAP-Rule" id="MF_00178"/>
    </source>
</evidence>
<comment type="function">
    <text evidence="1">Catalyzes the formation of 6,7-dimethyl-8-ribityllumazine by condensation of 5-amino-6-(D-ribitylamino)uracil with 3,4-dihydroxy-2-butanone 4-phosphate. This is the penultimate step in the biosynthesis of riboflavin.</text>
</comment>
<comment type="catalytic activity">
    <reaction evidence="1">
        <text>(2S)-2-hydroxy-3-oxobutyl phosphate + 5-amino-6-(D-ribitylamino)uracil = 6,7-dimethyl-8-(1-D-ribityl)lumazine + phosphate + 2 H2O + H(+)</text>
        <dbReference type="Rhea" id="RHEA:26152"/>
        <dbReference type="ChEBI" id="CHEBI:15377"/>
        <dbReference type="ChEBI" id="CHEBI:15378"/>
        <dbReference type="ChEBI" id="CHEBI:15934"/>
        <dbReference type="ChEBI" id="CHEBI:43474"/>
        <dbReference type="ChEBI" id="CHEBI:58201"/>
        <dbReference type="ChEBI" id="CHEBI:58830"/>
        <dbReference type="EC" id="2.5.1.78"/>
    </reaction>
</comment>
<comment type="pathway">
    <text evidence="1">Cofactor biosynthesis; riboflavin biosynthesis; riboflavin from 2-hydroxy-3-oxobutyl phosphate and 5-amino-6-(D-ribitylamino)uracil: step 1/2.</text>
</comment>
<comment type="similarity">
    <text evidence="1">Belongs to the DMRL synthase family.</text>
</comment>
<name>RISB_TROW8</name>
<organism>
    <name type="scientific">Tropheryma whipplei (strain TW08/27)</name>
    <name type="common">Whipple's bacillus</name>
    <dbReference type="NCBI Taxonomy" id="218496"/>
    <lineage>
        <taxon>Bacteria</taxon>
        <taxon>Bacillati</taxon>
        <taxon>Actinomycetota</taxon>
        <taxon>Actinomycetes</taxon>
        <taxon>Micrococcales</taxon>
        <taxon>Tropherymataceae</taxon>
        <taxon>Tropheryma</taxon>
    </lineage>
</organism>
<accession>Q83HB9</accession>
<dbReference type="EC" id="2.5.1.78" evidence="1"/>
<dbReference type="EMBL" id="BX251412">
    <property type="protein sequence ID" value="CAD67369.1"/>
    <property type="molecule type" value="Genomic_DNA"/>
</dbReference>
<dbReference type="RefSeq" id="WP_011096647.1">
    <property type="nucleotide sequence ID" value="NC_004551.1"/>
</dbReference>
<dbReference type="SMR" id="Q83HB9"/>
<dbReference type="GeneID" id="67388485"/>
<dbReference type="KEGG" id="tws:TW710"/>
<dbReference type="HOGENOM" id="CLU_089358_1_1_11"/>
<dbReference type="UniPathway" id="UPA00275">
    <property type="reaction ID" value="UER00404"/>
</dbReference>
<dbReference type="GO" id="GO:0005829">
    <property type="term" value="C:cytosol"/>
    <property type="evidence" value="ECO:0007669"/>
    <property type="project" value="TreeGrafter"/>
</dbReference>
<dbReference type="GO" id="GO:0009349">
    <property type="term" value="C:riboflavin synthase complex"/>
    <property type="evidence" value="ECO:0007669"/>
    <property type="project" value="InterPro"/>
</dbReference>
<dbReference type="GO" id="GO:0000906">
    <property type="term" value="F:6,7-dimethyl-8-ribityllumazine synthase activity"/>
    <property type="evidence" value="ECO:0007669"/>
    <property type="project" value="UniProtKB-UniRule"/>
</dbReference>
<dbReference type="GO" id="GO:0009231">
    <property type="term" value="P:riboflavin biosynthetic process"/>
    <property type="evidence" value="ECO:0007669"/>
    <property type="project" value="UniProtKB-UniRule"/>
</dbReference>
<dbReference type="CDD" id="cd09209">
    <property type="entry name" value="Lumazine_synthase-I"/>
    <property type="match status" value="1"/>
</dbReference>
<dbReference type="Gene3D" id="3.40.50.960">
    <property type="entry name" value="Lumazine/riboflavin synthase"/>
    <property type="match status" value="1"/>
</dbReference>
<dbReference type="HAMAP" id="MF_00178">
    <property type="entry name" value="Lumazine_synth"/>
    <property type="match status" value="1"/>
</dbReference>
<dbReference type="InterPro" id="IPR034964">
    <property type="entry name" value="LS"/>
</dbReference>
<dbReference type="InterPro" id="IPR002180">
    <property type="entry name" value="LS/RS"/>
</dbReference>
<dbReference type="InterPro" id="IPR036467">
    <property type="entry name" value="LS/RS_sf"/>
</dbReference>
<dbReference type="NCBIfam" id="TIGR00114">
    <property type="entry name" value="lumazine-synth"/>
    <property type="match status" value="1"/>
</dbReference>
<dbReference type="PANTHER" id="PTHR21058:SF0">
    <property type="entry name" value="6,7-DIMETHYL-8-RIBITYLLUMAZINE SYNTHASE"/>
    <property type="match status" value="1"/>
</dbReference>
<dbReference type="PANTHER" id="PTHR21058">
    <property type="entry name" value="6,7-DIMETHYL-8-RIBITYLLUMAZINE SYNTHASE DMRL SYNTHASE LUMAZINE SYNTHASE"/>
    <property type="match status" value="1"/>
</dbReference>
<dbReference type="Pfam" id="PF00885">
    <property type="entry name" value="DMRL_synthase"/>
    <property type="match status" value="1"/>
</dbReference>
<dbReference type="SUPFAM" id="SSF52121">
    <property type="entry name" value="Lumazine synthase"/>
    <property type="match status" value="1"/>
</dbReference>
<protein>
    <recommendedName>
        <fullName evidence="1">6,7-dimethyl-8-ribityllumazine synthase</fullName>
        <shortName evidence="1">DMRL synthase</shortName>
        <shortName evidence="1">LS</shortName>
        <shortName evidence="1">Lumazine synthase</shortName>
        <ecNumber evidence="1">2.5.1.78</ecNumber>
    </recommendedName>
</protein>
<reference key="1">
    <citation type="journal article" date="2003" name="Lancet">
        <title>Sequencing and analysis of the genome of the Whipple's disease bacterium Tropheryma whipplei.</title>
        <authorList>
            <person name="Bentley S.D."/>
            <person name="Maiwald M."/>
            <person name="Murphy L.D."/>
            <person name="Pallen M.J."/>
            <person name="Yeats C.A."/>
            <person name="Dover L.G."/>
            <person name="Norbertczak H.T."/>
            <person name="Besra G.S."/>
            <person name="Quail M.A."/>
            <person name="Harris D.E."/>
            <person name="von Herbay A."/>
            <person name="Goble A."/>
            <person name="Rutter S."/>
            <person name="Squares R."/>
            <person name="Squares S."/>
            <person name="Barrell B.G."/>
            <person name="Parkhill J."/>
            <person name="Relman D.A."/>
        </authorList>
    </citation>
    <scope>NUCLEOTIDE SEQUENCE [LARGE SCALE GENOMIC DNA]</scope>
    <source>
        <strain>TW08/27</strain>
    </source>
</reference>
<sequence>MGKDRNLSLNSPESIQSVIGDTDIKIAVIAAMWHEKIVRGLIDGATREIVSSGSHAELFRVPGSVELVLACKKLLKTFDAAVALGVILRGETDHNTHIARLVLSGITDVMLALEKPIGIGVLTIDTEQQGLDRSSGDYNAGVNAARAVIRMVRLFR</sequence>
<gene>
    <name evidence="1" type="primary">ribH</name>
    <name type="ordered locus">TW710</name>
</gene>
<feature type="chain" id="PRO_0000134824" description="6,7-dimethyl-8-ribityllumazine synthase">
    <location>
        <begin position="1"/>
        <end position="156"/>
    </location>
</feature>
<feature type="active site" description="Proton donor" evidence="1">
    <location>
        <position position="94"/>
    </location>
</feature>
<feature type="binding site" evidence="1">
    <location>
        <position position="33"/>
    </location>
    <ligand>
        <name>5-amino-6-(D-ribitylamino)uracil</name>
        <dbReference type="ChEBI" id="CHEBI:15934"/>
    </ligand>
</feature>
<feature type="binding site" evidence="1">
    <location>
        <begin position="64"/>
        <end position="66"/>
    </location>
    <ligand>
        <name>5-amino-6-(D-ribitylamino)uracil</name>
        <dbReference type="ChEBI" id="CHEBI:15934"/>
    </ligand>
</feature>
<feature type="binding site" evidence="1">
    <location>
        <begin position="86"/>
        <end position="88"/>
    </location>
    <ligand>
        <name>5-amino-6-(D-ribitylamino)uracil</name>
        <dbReference type="ChEBI" id="CHEBI:15934"/>
    </ligand>
</feature>
<feature type="binding site" evidence="1">
    <location>
        <begin position="91"/>
        <end position="92"/>
    </location>
    <ligand>
        <name>(2S)-2-hydroxy-3-oxobutyl phosphate</name>
        <dbReference type="ChEBI" id="CHEBI:58830"/>
    </ligand>
</feature>
<feature type="binding site" evidence="1">
    <location>
        <position position="119"/>
    </location>
    <ligand>
        <name>5-amino-6-(D-ribitylamino)uracil</name>
        <dbReference type="ChEBI" id="CHEBI:15934"/>
    </ligand>
</feature>
<feature type="binding site" evidence="1">
    <location>
        <position position="133"/>
    </location>
    <ligand>
        <name>(2S)-2-hydroxy-3-oxobutyl phosphate</name>
        <dbReference type="ChEBI" id="CHEBI:58830"/>
    </ligand>
</feature>
<keyword id="KW-0686">Riboflavin biosynthesis</keyword>
<keyword id="KW-0808">Transferase</keyword>